<proteinExistence type="evidence at protein level"/>
<comment type="function">
    <text evidence="4 5">May play a role in primary nitrogen assimilation in roots. Could supply a constitutive level of glutamate to maintain a basal level of protein synthesis.</text>
</comment>
<comment type="catalytic activity">
    <reaction>
        <text>2 oxidized [2Fe-2S]-[ferredoxin] + 2 L-glutamate = L-glutamine + 2 reduced [2Fe-2S]-[ferredoxin] + 2-oxoglutarate + 2 H(+)</text>
        <dbReference type="Rhea" id="RHEA:12128"/>
        <dbReference type="Rhea" id="RHEA-COMP:10000"/>
        <dbReference type="Rhea" id="RHEA-COMP:10001"/>
        <dbReference type="ChEBI" id="CHEBI:15378"/>
        <dbReference type="ChEBI" id="CHEBI:16810"/>
        <dbReference type="ChEBI" id="CHEBI:29985"/>
        <dbReference type="ChEBI" id="CHEBI:33737"/>
        <dbReference type="ChEBI" id="CHEBI:33738"/>
        <dbReference type="ChEBI" id="CHEBI:58359"/>
        <dbReference type="EC" id="1.4.7.1"/>
    </reaction>
</comment>
<comment type="cofactor">
    <cofactor evidence="1">
        <name>[3Fe-4S] cluster</name>
        <dbReference type="ChEBI" id="CHEBI:21137"/>
    </cofactor>
    <text evidence="1">Binds 1 [3Fe-4S] cluster.</text>
</comment>
<comment type="cofactor">
    <cofactor evidence="1">
        <name>FAD</name>
        <dbReference type="ChEBI" id="CHEBI:57692"/>
    </cofactor>
</comment>
<comment type="cofactor">
    <cofactor evidence="1">
        <name>FMN</name>
        <dbReference type="ChEBI" id="CHEBI:58210"/>
    </cofactor>
</comment>
<comment type="pathway">
    <text>Amino-acid biosynthesis; L-glutamate biosynthesis via GLT pathway; L-glutamate from 2-oxoglutarate and L-glutamine (ferredoxin route): step 1/1.</text>
</comment>
<comment type="pathway">
    <text>Energy metabolism; nitrogen metabolism.</text>
</comment>
<comment type="subcellular location">
    <subcellularLocation>
        <location evidence="1">Plastid</location>
        <location evidence="1">Chloroplast stroma</location>
    </subcellularLocation>
</comment>
<comment type="tissue specificity">
    <text evidence="4 5">Expressed predominantly in roots and slightly in leaves. Low expression in the leaf mesophyll and phloem companion cell-sieve element complex.</text>
</comment>
<comment type="disruption phenotype">
    <text evidence="4">No visible phenotype. The glutamate and glutamine levels were unaffected.</text>
</comment>
<comment type="similarity">
    <text evidence="6">Belongs to the glutamate synthase family.</text>
</comment>
<protein>
    <recommendedName>
        <fullName>Ferredoxin-dependent glutamate synthase 2, chloroplastic</fullName>
        <ecNumber>1.4.7.1</ecNumber>
    </recommendedName>
    <alternativeName>
        <fullName>Fd-GOGAT 2</fullName>
    </alternativeName>
</protein>
<name>GLTB2_ARATH</name>
<keyword id="KW-0003">3Fe-4S</keyword>
<keyword id="KW-0028">Amino-acid biosynthesis</keyword>
<keyword id="KW-0150">Chloroplast</keyword>
<keyword id="KW-0274">FAD</keyword>
<keyword id="KW-0285">Flavoprotein</keyword>
<keyword id="KW-0288">FMN</keyword>
<keyword id="KW-0314">Glutamate biosynthesis</keyword>
<keyword id="KW-0315">Glutamine amidotransferase</keyword>
<keyword id="KW-0408">Iron</keyword>
<keyword id="KW-0411">Iron-sulfur</keyword>
<keyword id="KW-0479">Metal-binding</keyword>
<keyword id="KW-0560">Oxidoreductase</keyword>
<keyword id="KW-0934">Plastid</keyword>
<keyword id="KW-1185">Reference proteome</keyword>
<keyword id="KW-0809">Transit peptide</keyword>
<gene>
    <name type="primary">GLU2</name>
    <name type="ordered locus">At2g41220</name>
    <name type="ORF">F13H10.23</name>
</gene>
<accession>Q9T0P4</accession>
<accession>O80665</accession>
<reference key="1">
    <citation type="journal article" date="1998" name="Plant Cell">
        <title>Arabidopsis gls mutants and distinct Fd-GOGAT genes. Implications for photorespiration and primary nitrogen assimilation.</title>
        <authorList>
            <person name="Coschigano K.T."/>
            <person name="Melo-Oliveira R."/>
            <person name="Lim J."/>
            <person name="Coruzzi G.M."/>
        </authorList>
    </citation>
    <scope>NUCLEOTIDE SEQUENCE [MRNA]</scope>
    <scope>TISSUE SPECIFICITY</scope>
    <scope>FUNCTION</scope>
    <source>
        <strain>cv. Columbia</strain>
    </source>
</reference>
<reference key="2">
    <citation type="journal article" date="1999" name="Nature">
        <title>Sequence and analysis of chromosome 2 of the plant Arabidopsis thaliana.</title>
        <authorList>
            <person name="Lin X."/>
            <person name="Kaul S."/>
            <person name="Rounsley S.D."/>
            <person name="Shea T.P."/>
            <person name="Benito M.-I."/>
            <person name="Town C.D."/>
            <person name="Fujii C.Y."/>
            <person name="Mason T.M."/>
            <person name="Bowman C.L."/>
            <person name="Barnstead M.E."/>
            <person name="Feldblyum T.V."/>
            <person name="Buell C.R."/>
            <person name="Ketchum K.A."/>
            <person name="Lee J.J."/>
            <person name="Ronning C.M."/>
            <person name="Koo H.L."/>
            <person name="Moffat K.S."/>
            <person name="Cronin L.A."/>
            <person name="Shen M."/>
            <person name="Pai G."/>
            <person name="Van Aken S."/>
            <person name="Umayam L."/>
            <person name="Tallon L.J."/>
            <person name="Gill J.E."/>
            <person name="Adams M.D."/>
            <person name="Carrera A.J."/>
            <person name="Creasy T.H."/>
            <person name="Goodman H.M."/>
            <person name="Somerville C.R."/>
            <person name="Copenhaver G.P."/>
            <person name="Preuss D."/>
            <person name="Nierman W.C."/>
            <person name="White O."/>
            <person name="Eisen J.A."/>
            <person name="Salzberg S.L."/>
            <person name="Fraser C.M."/>
            <person name="Venter J.C."/>
        </authorList>
    </citation>
    <scope>NUCLEOTIDE SEQUENCE [LARGE SCALE GENOMIC DNA]</scope>
    <source>
        <strain>cv. Columbia</strain>
    </source>
</reference>
<reference key="3">
    <citation type="journal article" date="2017" name="Plant J.">
        <title>Araport11: a complete reannotation of the Arabidopsis thaliana reference genome.</title>
        <authorList>
            <person name="Cheng C.Y."/>
            <person name="Krishnakumar V."/>
            <person name="Chan A.P."/>
            <person name="Thibaud-Nissen F."/>
            <person name="Schobel S."/>
            <person name="Town C.D."/>
        </authorList>
    </citation>
    <scope>GENOME REANNOTATION</scope>
    <source>
        <strain>cv. Columbia</strain>
    </source>
</reference>
<reference key="4">
    <citation type="journal article" date="2009" name="FEBS J.">
        <title>Assimilation of excess ammonium into amino acids and nitrogen translocation in Arabidopsis thaliana--roles of glutamate synthases and carbamoylphosphate synthetase in leaves.</title>
        <authorList>
            <person name="Potel F."/>
            <person name="Valadier M.H."/>
            <person name="Ferrario-Mery S."/>
            <person name="Grandjean O."/>
            <person name="Morin H."/>
            <person name="Gaufichon L."/>
            <person name="Boutet-Mercey S."/>
            <person name="Lothier J."/>
            <person name="Rothstein S.J."/>
            <person name="Hirose N."/>
            <person name="Suzuki A."/>
        </authorList>
    </citation>
    <scope>TISSUE SPECIFICITY</scope>
    <scope>DISRUPTION PHENOTYPE</scope>
    <scope>FUNCTION</scope>
</reference>
<reference key="5">
    <citation type="journal article" date="2009" name="J. Proteomics">
        <title>Phosphoproteomic analysis of nuclei-enriched fractions from Arabidopsis thaliana.</title>
        <authorList>
            <person name="Jones A.M.E."/>
            <person name="MacLean D."/>
            <person name="Studholme D.J."/>
            <person name="Serna-Sanz A."/>
            <person name="Andreasson E."/>
            <person name="Rathjen J.P."/>
            <person name="Peck S.C."/>
        </authorList>
    </citation>
    <scope>IDENTIFICATION BY MASS SPECTROMETRY [LARGE SCALE ANALYSIS]</scope>
    <source>
        <strain>cv. Columbia</strain>
    </source>
</reference>
<dbReference type="EC" id="1.4.7.1"/>
<dbReference type="EMBL" id="U39288">
    <property type="protein sequence ID" value="AAC78552.1"/>
    <property type="molecule type" value="mRNA"/>
</dbReference>
<dbReference type="EMBL" id="AC005662">
    <property type="protein sequence ID" value="AAC78549.1"/>
    <property type="molecule type" value="Genomic_DNA"/>
</dbReference>
<dbReference type="EMBL" id="CP002685">
    <property type="protein sequence ID" value="AEC09945.1"/>
    <property type="molecule type" value="Genomic_DNA"/>
</dbReference>
<dbReference type="PIR" id="C84839">
    <property type="entry name" value="C84839"/>
</dbReference>
<dbReference type="RefSeq" id="NP_181655.1">
    <property type="nucleotide sequence ID" value="NM_129687.5"/>
</dbReference>
<dbReference type="SMR" id="Q9T0P4"/>
<dbReference type="BioGRID" id="4058">
    <property type="interactions" value="10"/>
</dbReference>
<dbReference type="FunCoup" id="Q9T0P4">
    <property type="interactions" value="315"/>
</dbReference>
<dbReference type="STRING" id="3702.Q9T0P4"/>
<dbReference type="iPTMnet" id="Q9T0P4"/>
<dbReference type="PaxDb" id="3702-AT2G41220.1"/>
<dbReference type="ProteomicsDB" id="230405"/>
<dbReference type="EnsemblPlants" id="AT2G41220.1">
    <property type="protein sequence ID" value="AT2G41220.1"/>
    <property type="gene ID" value="AT2G41220"/>
</dbReference>
<dbReference type="GeneID" id="818721"/>
<dbReference type="Gramene" id="AT2G41220.1">
    <property type="protein sequence ID" value="AT2G41220.1"/>
    <property type="gene ID" value="AT2G41220"/>
</dbReference>
<dbReference type="KEGG" id="ath:AT2G41220"/>
<dbReference type="Araport" id="AT2G41220"/>
<dbReference type="TAIR" id="AT2G41220">
    <property type="gene designation" value="GLU2"/>
</dbReference>
<dbReference type="eggNOG" id="KOG0399">
    <property type="taxonomic scope" value="Eukaryota"/>
</dbReference>
<dbReference type="HOGENOM" id="CLU_000422_8_2_1"/>
<dbReference type="InParanoid" id="Q9T0P4"/>
<dbReference type="OMA" id="SERGECG"/>
<dbReference type="PhylomeDB" id="Q9T0P4"/>
<dbReference type="BioCyc" id="ARA:AT2G41220-MONOMER"/>
<dbReference type="BRENDA" id="1.4.7.1">
    <property type="organism ID" value="399"/>
</dbReference>
<dbReference type="UniPathway" id="UPA00045"/>
<dbReference type="UniPathway" id="UPA00634">
    <property type="reaction ID" value="UER00691"/>
</dbReference>
<dbReference type="CD-CODE" id="4299E36E">
    <property type="entry name" value="Nucleolus"/>
</dbReference>
<dbReference type="PRO" id="PR:Q9T0P4"/>
<dbReference type="Proteomes" id="UP000006548">
    <property type="component" value="Chromosome 2"/>
</dbReference>
<dbReference type="ExpressionAtlas" id="Q9T0P4">
    <property type="expression patterns" value="baseline and differential"/>
</dbReference>
<dbReference type="GO" id="GO:0009507">
    <property type="term" value="C:chloroplast"/>
    <property type="evidence" value="ECO:0007005"/>
    <property type="project" value="TAIR"/>
</dbReference>
<dbReference type="GO" id="GO:0009941">
    <property type="term" value="C:chloroplast envelope"/>
    <property type="evidence" value="ECO:0007005"/>
    <property type="project" value="TAIR"/>
</dbReference>
<dbReference type="GO" id="GO:0009570">
    <property type="term" value="C:chloroplast stroma"/>
    <property type="evidence" value="ECO:0007669"/>
    <property type="project" value="UniProtKB-SubCell"/>
</dbReference>
<dbReference type="GO" id="GO:0009536">
    <property type="term" value="C:plastid"/>
    <property type="evidence" value="ECO:0007005"/>
    <property type="project" value="TAIR"/>
</dbReference>
<dbReference type="GO" id="GO:0051538">
    <property type="term" value="F:3 iron, 4 sulfur cluster binding"/>
    <property type="evidence" value="ECO:0007669"/>
    <property type="project" value="UniProtKB-KW"/>
</dbReference>
<dbReference type="GO" id="GO:0016041">
    <property type="term" value="F:glutamate synthase (ferredoxin) activity"/>
    <property type="evidence" value="ECO:0000250"/>
    <property type="project" value="TAIR"/>
</dbReference>
<dbReference type="GO" id="GO:0046872">
    <property type="term" value="F:metal ion binding"/>
    <property type="evidence" value="ECO:0007669"/>
    <property type="project" value="UniProtKB-KW"/>
</dbReference>
<dbReference type="GO" id="GO:0097054">
    <property type="term" value="P:L-glutamate biosynthetic process"/>
    <property type="evidence" value="ECO:0007669"/>
    <property type="project" value="UniProtKB-UniPathway"/>
</dbReference>
<dbReference type="CDD" id="cd00982">
    <property type="entry name" value="gltB_C"/>
    <property type="match status" value="1"/>
</dbReference>
<dbReference type="CDD" id="cd00713">
    <property type="entry name" value="GltS"/>
    <property type="match status" value="1"/>
</dbReference>
<dbReference type="CDD" id="cd02808">
    <property type="entry name" value="GltS_FMN"/>
    <property type="match status" value="1"/>
</dbReference>
<dbReference type="FunFam" id="2.160.20.60:FF:000003">
    <property type="entry name" value="Ferredoxin-dependent glutamate synthase, chloroplastic"/>
    <property type="match status" value="1"/>
</dbReference>
<dbReference type="FunFam" id="3.20.20.70:FF:000084">
    <property type="entry name" value="Ferredoxin-dependent glutamate synthase, chloroplastic"/>
    <property type="match status" value="1"/>
</dbReference>
<dbReference type="FunFam" id="3.20.20.70:FF:000127">
    <property type="entry name" value="Ferredoxin-dependent glutamate synthase, chloroplastic"/>
    <property type="match status" value="1"/>
</dbReference>
<dbReference type="FunFam" id="3.60.20.10:FF:000001">
    <property type="entry name" value="Glutamate synthase, large subunit"/>
    <property type="match status" value="1"/>
</dbReference>
<dbReference type="Gene3D" id="3.20.20.70">
    <property type="entry name" value="Aldolase class I"/>
    <property type="match status" value="2"/>
</dbReference>
<dbReference type="Gene3D" id="2.160.20.60">
    <property type="entry name" value="Glutamate synthase, alpha subunit, C-terminal domain"/>
    <property type="match status" value="1"/>
</dbReference>
<dbReference type="Gene3D" id="3.60.20.10">
    <property type="entry name" value="Glutamine Phosphoribosylpyrophosphate, subunit 1, domain 1"/>
    <property type="match status" value="1"/>
</dbReference>
<dbReference type="InterPro" id="IPR013785">
    <property type="entry name" value="Aldolase_TIM"/>
</dbReference>
<dbReference type="InterPro" id="IPR050711">
    <property type="entry name" value="ET-N_metabolism_enzyme"/>
</dbReference>
<dbReference type="InterPro" id="IPR017932">
    <property type="entry name" value="GATase_2_dom"/>
</dbReference>
<dbReference type="InterPro" id="IPR002489">
    <property type="entry name" value="Glu_synth_asu_C"/>
</dbReference>
<dbReference type="InterPro" id="IPR036485">
    <property type="entry name" value="Glu_synth_asu_C_sf"/>
</dbReference>
<dbReference type="InterPro" id="IPR006982">
    <property type="entry name" value="Glu_synth_centr_N"/>
</dbReference>
<dbReference type="InterPro" id="IPR002932">
    <property type="entry name" value="Glu_synthdom"/>
</dbReference>
<dbReference type="InterPro" id="IPR029055">
    <property type="entry name" value="Ntn_hydrolases_N"/>
</dbReference>
<dbReference type="NCBIfam" id="NF008730">
    <property type="entry name" value="PRK11750.1"/>
    <property type="match status" value="1"/>
</dbReference>
<dbReference type="PANTHER" id="PTHR11938">
    <property type="entry name" value="FAD NADPH DEHYDROGENASE/OXIDOREDUCTASE"/>
    <property type="match status" value="1"/>
</dbReference>
<dbReference type="PANTHER" id="PTHR11938:SF138">
    <property type="entry name" value="FERREDOXIN-DEPENDENT GLUTAMATE SYNTHASE 2, CHLOROPLASTIC"/>
    <property type="match status" value="1"/>
</dbReference>
<dbReference type="Pfam" id="PF00310">
    <property type="entry name" value="GATase_2"/>
    <property type="match status" value="1"/>
</dbReference>
<dbReference type="Pfam" id="PF04898">
    <property type="entry name" value="Glu_syn_central"/>
    <property type="match status" value="1"/>
</dbReference>
<dbReference type="Pfam" id="PF01645">
    <property type="entry name" value="Glu_synthase"/>
    <property type="match status" value="1"/>
</dbReference>
<dbReference type="Pfam" id="PF01493">
    <property type="entry name" value="GXGXG"/>
    <property type="match status" value="1"/>
</dbReference>
<dbReference type="SUPFAM" id="SSF69336">
    <property type="entry name" value="Alpha subunit of glutamate synthase, C-terminal domain"/>
    <property type="match status" value="1"/>
</dbReference>
<dbReference type="SUPFAM" id="SSF51395">
    <property type="entry name" value="FMN-linked oxidoreductases"/>
    <property type="match status" value="1"/>
</dbReference>
<dbReference type="SUPFAM" id="SSF56235">
    <property type="entry name" value="N-terminal nucleophile aminohydrolases (Ntn hydrolases)"/>
    <property type="match status" value="1"/>
</dbReference>
<dbReference type="PROSITE" id="PS51278">
    <property type="entry name" value="GATASE_TYPE_2"/>
    <property type="match status" value="1"/>
</dbReference>
<evidence type="ECO:0000250" key="1"/>
<evidence type="ECO:0000255" key="2">
    <source>
        <dbReference type="PROSITE-ProRule" id="PRU00609"/>
    </source>
</evidence>
<evidence type="ECO:0000256" key="3">
    <source>
        <dbReference type="SAM" id="MobiDB-lite"/>
    </source>
</evidence>
<evidence type="ECO:0000269" key="4">
    <source>
    </source>
</evidence>
<evidence type="ECO:0000269" key="5">
    <source>
    </source>
</evidence>
<evidence type="ECO:0000305" key="6"/>
<sequence length="1629" mass="177752">MALQSPGATGASSSVSRLLSSAKLSSTKTIFSVDFVRSYCISKGTKRRNELSGFRGYSPLLKSSLRSPFSVKAILNSDRAAGDASSSFSDLKPQVAYLEDIISERGACGVGFIANLENKATHKIVNDALIALGCMEHRGGCGSDNTSGDGSGLMTSIPWDLFNEWAEKQGIASFDRTHTGVGMLFLPRDDNIRKEAKKVITSIFEKEGLEVLGWRDVPVEASIVGHNAKQTMPNTEQVFVRIVKDDKVDDVERELYICRKLIERAVASESWASELYFSSLSNQTIVYKGMLRSEVLGLFYPDLQNDLYKSPFAIYHRRFSTNTSPRWHLAQPMRFLGHNGEINTIQGNLNWMTSREASLRSPVWHGRENDIRPISNPKASDSANLDSAAELLIRSGRTPEESLMILVPEAYKNHPTLMIKYPEAVDFYDYYKGQMEPWDGPALVLFSDGKTVGACLDRNGLRPARYWRTSDNVVYVASEVGVLPMDESKVTMKGRLGPGMMISVDLENGQVYENTEVKKRVASYNPYGKWVSENLRNLKPSNYLSSAILETDETLRRQQAFGYSSEDVQMVIESMAAQGKEPTFCMGDDTPVAVLSQKPHMLYDYFKQRFAQVTNPAIDPLREGLVMSLEVNIGKRGNILEVGPQNVSQVVLSGPVLNERELEGLLGDPLLKSQILPTFFDIRRGIEGSLKKGLLKLCEAADEAVRNGSQVLVLSDRSDNPEPTRPAIPMLLAVGAVHQHLIQNGLRMSASIIADTAQCFSTHHFACLIGYGASAICPHLALETCRQWRLSNKTVNMMRNGKMPTVTMEQAQKNYRKAVNTGLLKVLSKMGISLFSSYCGAQIFEIYGLGNEVVEFSFRGSASQIGGLTLDELARETLTFWVRAFSEDTAKRLENFGFIQFRPGGEYHGNNPEMSKLLHKAVREKSETAYAVYQQHLANRPITVFRDLLEFKSDRNPIPVGKVEPASSIVERFCTGGMSLGAISRETHETIAIAMNRLGGKSNSGEGGEDPIRWKPLTDVVDGYSSTLPHLKGLRNGDTATSAIKQVASGRFGVTPTFLVNADQLEIKVAQGAKPGEGGQLPGKKVSAYIARLRNSKPGVPLISPPPHHDIYSIEDLAQLIFDLHQVNPKAKVSVKLVSETGIGTVASGVAKANADIIQISGYDGGTGASPISSIKHAGGPWELGLAETQKTLIGNGLRERVIIRVDGGFKSGVDVLIAAAMGADEYGFGTLAMIATGCIMARICHTNNCPVGVASQREELRARFPGLPGDLVNFFLYIAEEVRGILAQLGYEKLDDIIGRTDLLKARDISLVKTHLDLSYLLSSVGLPKRSSTSIRKQEVHSNGPVLDDTLLQDPEIMDAIENEKTVHKTMSIYNVDRSVCGRIAGVIAKKYGDTGFAGQLNLTFTGSAGQSFACFLTPGMNIRLVGEANDYVGKGMAGGEVVILPVESTGFRPEDATIVGNTCLYGATGGLLFVRGKAGERFAVRNSLAQAVVEGTGDHCCEYMTGGCVVILGKVGRNVAAGMTGGLAYILDEDNTLLPKMNKEIVKIQRVTSPVGQTQLKSLIQAHVEKTGSSKGAMIVEEWDKYLAMFWQLVPPSEEDTPEANSDHILKTTTGDEEQVSSTLAEK</sequence>
<feature type="transit peptide" description="Chloroplast" evidence="1">
    <location>
        <begin position="1"/>
        <end position="107"/>
    </location>
</feature>
<feature type="chain" id="PRO_0000011615" description="Ferredoxin-dependent glutamate synthase 2, chloroplastic">
    <location>
        <begin position="108"/>
        <end position="1629"/>
    </location>
</feature>
<feature type="domain" description="Glutamine amidotransferase type-2" evidence="2">
    <location>
        <begin position="108"/>
        <end position="507"/>
    </location>
</feature>
<feature type="region of interest" description="Disordered" evidence="3">
    <location>
        <begin position="1599"/>
        <end position="1629"/>
    </location>
</feature>
<feature type="active site" description="For GATase activity" evidence="1">
    <location>
        <position position="108"/>
    </location>
</feature>
<feature type="binding site" evidence="1">
    <location>
        <begin position="1186"/>
        <end position="1243"/>
    </location>
    <ligand>
        <name>FMN</name>
        <dbReference type="ChEBI" id="CHEBI:58210"/>
    </ligand>
</feature>
<feature type="binding site" evidence="1">
    <location>
        <position position="1239"/>
    </location>
    <ligand>
        <name>[3Fe-4S] cluster</name>
        <dbReference type="ChEBI" id="CHEBI:21137"/>
    </ligand>
</feature>
<feature type="binding site" evidence="1">
    <location>
        <position position="1245"/>
    </location>
    <ligand>
        <name>[3Fe-4S] cluster</name>
        <dbReference type="ChEBI" id="CHEBI:21137"/>
    </ligand>
</feature>
<feature type="binding site" evidence="1">
    <location>
        <position position="1250"/>
    </location>
    <ligand>
        <name>[3Fe-4S] cluster</name>
        <dbReference type="ChEBI" id="CHEBI:21137"/>
    </ligand>
</feature>
<feature type="sequence conflict" description="In Ref. 1; AAC78552." evidence="6" ref="1">
    <original>S</original>
    <variation>P</variation>
    <location>
        <position position="86"/>
    </location>
</feature>
<organism>
    <name type="scientific">Arabidopsis thaliana</name>
    <name type="common">Mouse-ear cress</name>
    <dbReference type="NCBI Taxonomy" id="3702"/>
    <lineage>
        <taxon>Eukaryota</taxon>
        <taxon>Viridiplantae</taxon>
        <taxon>Streptophyta</taxon>
        <taxon>Embryophyta</taxon>
        <taxon>Tracheophyta</taxon>
        <taxon>Spermatophyta</taxon>
        <taxon>Magnoliopsida</taxon>
        <taxon>eudicotyledons</taxon>
        <taxon>Gunneridae</taxon>
        <taxon>Pentapetalae</taxon>
        <taxon>rosids</taxon>
        <taxon>malvids</taxon>
        <taxon>Brassicales</taxon>
        <taxon>Brassicaceae</taxon>
        <taxon>Camelineae</taxon>
        <taxon>Arabidopsis</taxon>
    </lineage>
</organism>